<name>ATPF_NOCSJ</name>
<organism>
    <name type="scientific">Nocardioides sp. (strain ATCC BAA-499 / JS614)</name>
    <dbReference type="NCBI Taxonomy" id="196162"/>
    <lineage>
        <taxon>Bacteria</taxon>
        <taxon>Bacillati</taxon>
        <taxon>Actinomycetota</taxon>
        <taxon>Actinomycetes</taxon>
        <taxon>Propionibacteriales</taxon>
        <taxon>Nocardioidaceae</taxon>
        <taxon>Nocardioides</taxon>
    </lineage>
</organism>
<sequence length="189" mass="20497">MQALLAAPLAKAEELNPLLPHAIEIVLSLVVFGLLLFAVWKFVTPRFEQIYTERTQAIEGGLAAAETKQAEADAKLADLEQQLSEARHEAARIREEAREQGAQIIAEMREQAQADAARIVEHGKTQIEAERQQAVTSLRAEVGTLATSLAGRIVGESLEDDDRSARVVERFLADLETIEASQAAGGGES</sequence>
<comment type="function">
    <text evidence="1">F(1)F(0) ATP synthase produces ATP from ADP in the presence of a proton or sodium gradient. F-type ATPases consist of two structural domains, F(1) containing the extramembraneous catalytic core and F(0) containing the membrane proton channel, linked together by a central stalk and a peripheral stalk. During catalysis, ATP synthesis in the catalytic domain of F(1) is coupled via a rotary mechanism of the central stalk subunits to proton translocation.</text>
</comment>
<comment type="function">
    <text evidence="1">Component of the F(0) channel, it forms part of the peripheral stalk, linking F(1) to F(0).</text>
</comment>
<comment type="subunit">
    <text evidence="1">F-type ATPases have 2 components, F(1) - the catalytic core - and F(0) - the membrane proton channel. F(1) has five subunits: alpha(3), beta(3), gamma(1), delta(1), epsilon(1). F(0) has three main subunits: a(1), b(2) and c(10-14). The alpha and beta chains form an alternating ring which encloses part of the gamma chain. F(1) is attached to F(0) by a central stalk formed by the gamma and epsilon chains, while a peripheral stalk is formed by the delta and b chains.</text>
</comment>
<comment type="subcellular location">
    <subcellularLocation>
        <location evidence="1">Cell membrane</location>
        <topology evidence="1">Single-pass membrane protein</topology>
    </subcellularLocation>
</comment>
<comment type="similarity">
    <text evidence="1">Belongs to the ATPase B chain family.</text>
</comment>
<gene>
    <name evidence="1" type="primary">atpF</name>
    <name type="ordered locus">Noca_1759</name>
</gene>
<feature type="chain" id="PRO_0000368634" description="ATP synthase subunit b">
    <location>
        <begin position="1"/>
        <end position="189"/>
    </location>
</feature>
<feature type="transmembrane region" description="Helical" evidence="1">
    <location>
        <begin position="23"/>
        <end position="43"/>
    </location>
</feature>
<accession>A1SHI7</accession>
<proteinExistence type="inferred from homology"/>
<evidence type="ECO:0000255" key="1">
    <source>
        <dbReference type="HAMAP-Rule" id="MF_01398"/>
    </source>
</evidence>
<keyword id="KW-0066">ATP synthesis</keyword>
<keyword id="KW-1003">Cell membrane</keyword>
<keyword id="KW-0138">CF(0)</keyword>
<keyword id="KW-0375">Hydrogen ion transport</keyword>
<keyword id="KW-0406">Ion transport</keyword>
<keyword id="KW-0472">Membrane</keyword>
<keyword id="KW-1185">Reference proteome</keyword>
<keyword id="KW-0812">Transmembrane</keyword>
<keyword id="KW-1133">Transmembrane helix</keyword>
<keyword id="KW-0813">Transport</keyword>
<reference key="1">
    <citation type="submission" date="2006-12" db="EMBL/GenBank/DDBJ databases">
        <title>Complete sequence of chromosome 1 of Nocardioides sp. JS614.</title>
        <authorList>
            <person name="Copeland A."/>
            <person name="Lucas S."/>
            <person name="Lapidus A."/>
            <person name="Barry K."/>
            <person name="Detter J.C."/>
            <person name="Glavina del Rio T."/>
            <person name="Hammon N."/>
            <person name="Israni S."/>
            <person name="Dalin E."/>
            <person name="Tice H."/>
            <person name="Pitluck S."/>
            <person name="Thompson L.S."/>
            <person name="Brettin T."/>
            <person name="Bruce D."/>
            <person name="Han C."/>
            <person name="Tapia R."/>
            <person name="Schmutz J."/>
            <person name="Larimer F."/>
            <person name="Land M."/>
            <person name="Hauser L."/>
            <person name="Kyrpides N."/>
            <person name="Kim E."/>
            <person name="Mattes T."/>
            <person name="Gossett J."/>
            <person name="Richardson P."/>
        </authorList>
    </citation>
    <scope>NUCLEOTIDE SEQUENCE [LARGE SCALE GENOMIC DNA]</scope>
    <source>
        <strain>ATCC BAA-499 / JS614</strain>
    </source>
</reference>
<dbReference type="EMBL" id="CP000509">
    <property type="protein sequence ID" value="ABL81272.1"/>
    <property type="molecule type" value="Genomic_DNA"/>
</dbReference>
<dbReference type="SMR" id="A1SHI7"/>
<dbReference type="STRING" id="196162.Noca_1759"/>
<dbReference type="KEGG" id="nca:Noca_1759"/>
<dbReference type="eggNOG" id="COG0711">
    <property type="taxonomic scope" value="Bacteria"/>
</dbReference>
<dbReference type="HOGENOM" id="CLU_079215_5_1_11"/>
<dbReference type="OrthoDB" id="5243563at2"/>
<dbReference type="Proteomes" id="UP000000640">
    <property type="component" value="Chromosome"/>
</dbReference>
<dbReference type="GO" id="GO:0005886">
    <property type="term" value="C:plasma membrane"/>
    <property type="evidence" value="ECO:0007669"/>
    <property type="project" value="UniProtKB-SubCell"/>
</dbReference>
<dbReference type="GO" id="GO:0045259">
    <property type="term" value="C:proton-transporting ATP synthase complex"/>
    <property type="evidence" value="ECO:0007669"/>
    <property type="project" value="UniProtKB-KW"/>
</dbReference>
<dbReference type="GO" id="GO:0046933">
    <property type="term" value="F:proton-transporting ATP synthase activity, rotational mechanism"/>
    <property type="evidence" value="ECO:0007669"/>
    <property type="project" value="UniProtKB-UniRule"/>
</dbReference>
<dbReference type="GO" id="GO:0046961">
    <property type="term" value="F:proton-transporting ATPase activity, rotational mechanism"/>
    <property type="evidence" value="ECO:0007669"/>
    <property type="project" value="TreeGrafter"/>
</dbReference>
<dbReference type="CDD" id="cd06503">
    <property type="entry name" value="ATP-synt_Fo_b"/>
    <property type="match status" value="1"/>
</dbReference>
<dbReference type="Gene3D" id="1.20.5.620">
    <property type="entry name" value="F1F0 ATP synthase subunit B, membrane domain"/>
    <property type="match status" value="1"/>
</dbReference>
<dbReference type="HAMAP" id="MF_01398">
    <property type="entry name" value="ATP_synth_b_bprime"/>
    <property type="match status" value="1"/>
</dbReference>
<dbReference type="InterPro" id="IPR028987">
    <property type="entry name" value="ATP_synth_B-like_membr_sf"/>
</dbReference>
<dbReference type="InterPro" id="IPR002146">
    <property type="entry name" value="ATP_synth_b/b'su_bac/chlpt"/>
</dbReference>
<dbReference type="InterPro" id="IPR005864">
    <property type="entry name" value="ATP_synth_F0_bsu_bac"/>
</dbReference>
<dbReference type="InterPro" id="IPR050059">
    <property type="entry name" value="ATP_synthase_B_chain"/>
</dbReference>
<dbReference type="NCBIfam" id="TIGR01144">
    <property type="entry name" value="ATP_synt_b"/>
    <property type="match status" value="1"/>
</dbReference>
<dbReference type="NCBIfam" id="NF004412">
    <property type="entry name" value="PRK05759.1-3"/>
    <property type="match status" value="1"/>
</dbReference>
<dbReference type="PANTHER" id="PTHR33445:SF1">
    <property type="entry name" value="ATP SYNTHASE SUBUNIT B"/>
    <property type="match status" value="1"/>
</dbReference>
<dbReference type="PANTHER" id="PTHR33445">
    <property type="entry name" value="ATP SYNTHASE SUBUNIT B', CHLOROPLASTIC"/>
    <property type="match status" value="1"/>
</dbReference>
<dbReference type="Pfam" id="PF00430">
    <property type="entry name" value="ATP-synt_B"/>
    <property type="match status" value="1"/>
</dbReference>
<dbReference type="SUPFAM" id="SSF81573">
    <property type="entry name" value="F1F0 ATP synthase subunit B, membrane domain"/>
    <property type="match status" value="1"/>
</dbReference>
<protein>
    <recommendedName>
        <fullName evidence="1">ATP synthase subunit b</fullName>
    </recommendedName>
    <alternativeName>
        <fullName evidence="1">ATP synthase F(0) sector subunit b</fullName>
    </alternativeName>
    <alternativeName>
        <fullName evidence="1">ATPase subunit I</fullName>
    </alternativeName>
    <alternativeName>
        <fullName evidence="1">F-type ATPase subunit b</fullName>
        <shortName evidence="1">F-ATPase subunit b</shortName>
    </alternativeName>
</protein>